<keyword id="KW-0175">Coiled coil</keyword>
<keyword id="KW-0507">mRNA processing</keyword>
<keyword id="KW-0508">mRNA splicing</keyword>
<keyword id="KW-0539">Nucleus</keyword>
<keyword id="KW-1185">Reference proteome</keyword>
<keyword id="KW-0747">Spliceosome</keyword>
<gene>
    <name type="primary">cwc25</name>
    <name type="ORF">AFUA_2G10330</name>
</gene>
<sequence>MGGDLNLKKSWHPSLLRNQERVWAEEKRALEERKRIEQLRREREEERQIQELQRLQEASGKGRQLNRVDWMYQAPSSATGHYAEEMEGYLLGKRRIDGILLKNDESKKLEKGTDVVGANAAPPPVNNPRDTMAKVMADPLLEIKKREQAAYENMVKESVRRSQHIRDKDRDRDRERRRDRGDRDRSRDRDRSHRRSRHEDEDAHRSHRHRSHRHRSRSPLSPDRSDRKRGDDRDYRDERDRRDDRRDEHRGHDRRDDRRSERDRRADRGDEDRHSSRYKDRDDRYDHSTRRRSYADRSPSPRRGNHYYDRRRTEDRSDGYHRDSRNHDRPEFYRGNDRKVNKEPRDSNLRERSSNTRDEVAGNKEKVLEEERKKKLAEMMSNADELEQKRLQRIAEVTAMEEKEREADEKQRSERGRFVGQLHRQLQEDSLDDRIRRSRGGLERMED</sequence>
<evidence type="ECO:0000250" key="1"/>
<evidence type="ECO:0000255" key="2"/>
<evidence type="ECO:0000256" key="3">
    <source>
        <dbReference type="SAM" id="MobiDB-lite"/>
    </source>
</evidence>
<evidence type="ECO:0000305" key="4"/>
<dbReference type="EMBL" id="AAHF01000001">
    <property type="protein sequence ID" value="EAL93328.1"/>
    <property type="molecule type" value="Genomic_DNA"/>
</dbReference>
<dbReference type="RefSeq" id="XP_755366.1">
    <property type="nucleotide sequence ID" value="XM_750273.1"/>
</dbReference>
<dbReference type="SMR" id="Q4X1D7"/>
<dbReference type="STRING" id="330879.Q4X1D7"/>
<dbReference type="EnsemblFungi" id="EAL93328">
    <property type="protein sequence ID" value="EAL93328"/>
    <property type="gene ID" value="AFUA_2G10330"/>
</dbReference>
<dbReference type="GeneID" id="3513759"/>
<dbReference type="KEGG" id="afm:AFUA_2G10330"/>
<dbReference type="VEuPathDB" id="FungiDB:Afu2g10330"/>
<dbReference type="eggNOG" id="KOG3869">
    <property type="taxonomic scope" value="Eukaryota"/>
</dbReference>
<dbReference type="HOGENOM" id="CLU_025093_0_0_1"/>
<dbReference type="InParanoid" id="Q4X1D7"/>
<dbReference type="OMA" id="SWHPHTM"/>
<dbReference type="OrthoDB" id="21123at2759"/>
<dbReference type="Proteomes" id="UP000002530">
    <property type="component" value="Chromosome 2"/>
</dbReference>
<dbReference type="GO" id="GO:0005684">
    <property type="term" value="C:U2-type spliceosomal complex"/>
    <property type="evidence" value="ECO:0000318"/>
    <property type="project" value="GO_Central"/>
</dbReference>
<dbReference type="GO" id="GO:0000398">
    <property type="term" value="P:mRNA splicing, via spliceosome"/>
    <property type="evidence" value="ECO:0000318"/>
    <property type="project" value="GO_Central"/>
</dbReference>
<dbReference type="InterPro" id="IPR019339">
    <property type="entry name" value="CIR_N_dom"/>
</dbReference>
<dbReference type="InterPro" id="IPR022209">
    <property type="entry name" value="CWC25"/>
</dbReference>
<dbReference type="InterPro" id="IPR051376">
    <property type="entry name" value="CWC25_splicing_factor"/>
</dbReference>
<dbReference type="PANTHER" id="PTHR16196">
    <property type="entry name" value="CELL CYCLE CONTROL PROTEIN CWF25"/>
    <property type="match status" value="1"/>
</dbReference>
<dbReference type="PANTHER" id="PTHR16196:SF0">
    <property type="entry name" value="PRE-MRNA-SPLICING FACTOR CWC25 HOMOLOG"/>
    <property type="match status" value="1"/>
</dbReference>
<dbReference type="Pfam" id="PF10197">
    <property type="entry name" value="Cir_N"/>
    <property type="match status" value="1"/>
</dbReference>
<dbReference type="Pfam" id="PF12542">
    <property type="entry name" value="CWC25"/>
    <property type="match status" value="1"/>
</dbReference>
<dbReference type="SMART" id="SM01083">
    <property type="entry name" value="Cir_N"/>
    <property type="match status" value="1"/>
</dbReference>
<name>CWC25_ASPFU</name>
<comment type="function">
    <text evidence="1">Involved in pre-mRNA splicing.</text>
</comment>
<comment type="subunit">
    <text evidence="1">Associated with the spliceosome.</text>
</comment>
<comment type="subcellular location">
    <subcellularLocation>
        <location evidence="1">Nucleus</location>
    </subcellularLocation>
</comment>
<comment type="similarity">
    <text evidence="4">Belongs to the CWC25 family.</text>
</comment>
<reference key="1">
    <citation type="journal article" date="2005" name="Nature">
        <title>Genomic sequence of the pathogenic and allergenic filamentous fungus Aspergillus fumigatus.</title>
        <authorList>
            <person name="Nierman W.C."/>
            <person name="Pain A."/>
            <person name="Anderson M.J."/>
            <person name="Wortman J.R."/>
            <person name="Kim H.S."/>
            <person name="Arroyo J."/>
            <person name="Berriman M."/>
            <person name="Abe K."/>
            <person name="Archer D.B."/>
            <person name="Bermejo C."/>
            <person name="Bennett J.W."/>
            <person name="Bowyer P."/>
            <person name="Chen D."/>
            <person name="Collins M."/>
            <person name="Coulsen R."/>
            <person name="Davies R."/>
            <person name="Dyer P.S."/>
            <person name="Farman M.L."/>
            <person name="Fedorova N."/>
            <person name="Fedorova N.D."/>
            <person name="Feldblyum T.V."/>
            <person name="Fischer R."/>
            <person name="Fosker N."/>
            <person name="Fraser A."/>
            <person name="Garcia J.L."/>
            <person name="Garcia M.J."/>
            <person name="Goble A."/>
            <person name="Goldman G.H."/>
            <person name="Gomi K."/>
            <person name="Griffith-Jones S."/>
            <person name="Gwilliam R."/>
            <person name="Haas B.J."/>
            <person name="Haas H."/>
            <person name="Harris D.E."/>
            <person name="Horiuchi H."/>
            <person name="Huang J."/>
            <person name="Humphray S."/>
            <person name="Jimenez J."/>
            <person name="Keller N."/>
            <person name="Khouri H."/>
            <person name="Kitamoto K."/>
            <person name="Kobayashi T."/>
            <person name="Konzack S."/>
            <person name="Kulkarni R."/>
            <person name="Kumagai T."/>
            <person name="Lafton A."/>
            <person name="Latge J.-P."/>
            <person name="Li W."/>
            <person name="Lord A."/>
            <person name="Lu C."/>
            <person name="Majoros W.H."/>
            <person name="May G.S."/>
            <person name="Miller B.L."/>
            <person name="Mohamoud Y."/>
            <person name="Molina M."/>
            <person name="Monod M."/>
            <person name="Mouyna I."/>
            <person name="Mulligan S."/>
            <person name="Murphy L.D."/>
            <person name="O'Neil S."/>
            <person name="Paulsen I."/>
            <person name="Penalva M.A."/>
            <person name="Pertea M."/>
            <person name="Price C."/>
            <person name="Pritchard B.L."/>
            <person name="Quail M.A."/>
            <person name="Rabbinowitsch E."/>
            <person name="Rawlins N."/>
            <person name="Rajandream M.A."/>
            <person name="Reichard U."/>
            <person name="Renauld H."/>
            <person name="Robson G.D."/>
            <person name="Rodriguez de Cordoba S."/>
            <person name="Rodriguez-Pena J.M."/>
            <person name="Ronning C.M."/>
            <person name="Rutter S."/>
            <person name="Salzberg S.L."/>
            <person name="Sanchez M."/>
            <person name="Sanchez-Ferrero J.C."/>
            <person name="Saunders D."/>
            <person name="Seeger K."/>
            <person name="Squares R."/>
            <person name="Squares S."/>
            <person name="Takeuchi M."/>
            <person name="Tekaia F."/>
            <person name="Turner G."/>
            <person name="Vazquez de Aldana C.R."/>
            <person name="Weidman J."/>
            <person name="White O."/>
            <person name="Woodward J.R."/>
            <person name="Yu J.-H."/>
            <person name="Fraser C.M."/>
            <person name="Galagan J.E."/>
            <person name="Asai K."/>
            <person name="Machida M."/>
            <person name="Hall N."/>
            <person name="Barrell B.G."/>
            <person name="Denning D.W."/>
        </authorList>
    </citation>
    <scope>NUCLEOTIDE SEQUENCE [LARGE SCALE GENOMIC DNA]</scope>
    <source>
        <strain>ATCC MYA-4609 / CBS 101355 / FGSC A1100 / Af293</strain>
    </source>
</reference>
<protein>
    <recommendedName>
        <fullName>Pre-mRNA-splicing factor cwc25</fullName>
    </recommendedName>
</protein>
<organism>
    <name type="scientific">Aspergillus fumigatus (strain ATCC MYA-4609 / CBS 101355 / FGSC A1100 / Af293)</name>
    <name type="common">Neosartorya fumigata</name>
    <dbReference type="NCBI Taxonomy" id="330879"/>
    <lineage>
        <taxon>Eukaryota</taxon>
        <taxon>Fungi</taxon>
        <taxon>Dikarya</taxon>
        <taxon>Ascomycota</taxon>
        <taxon>Pezizomycotina</taxon>
        <taxon>Eurotiomycetes</taxon>
        <taxon>Eurotiomycetidae</taxon>
        <taxon>Eurotiales</taxon>
        <taxon>Aspergillaceae</taxon>
        <taxon>Aspergillus</taxon>
        <taxon>Aspergillus subgen. Fumigati</taxon>
    </lineage>
</organism>
<proteinExistence type="inferred from homology"/>
<feature type="chain" id="PRO_0000079584" description="Pre-mRNA-splicing factor cwc25">
    <location>
        <begin position="1"/>
        <end position="447"/>
    </location>
</feature>
<feature type="region of interest" description="Disordered" evidence="3">
    <location>
        <begin position="153"/>
        <end position="384"/>
    </location>
</feature>
<feature type="region of interest" description="Disordered" evidence="3">
    <location>
        <begin position="400"/>
        <end position="447"/>
    </location>
</feature>
<feature type="coiled-coil region" evidence="2">
    <location>
        <begin position="15"/>
        <end position="59"/>
    </location>
</feature>
<feature type="coiled-coil region" evidence="2">
    <location>
        <begin position="363"/>
        <end position="403"/>
    </location>
</feature>
<feature type="compositionally biased region" description="Basic and acidic residues" evidence="3">
    <location>
        <begin position="153"/>
        <end position="204"/>
    </location>
</feature>
<feature type="compositionally biased region" description="Basic residues" evidence="3">
    <location>
        <begin position="205"/>
        <end position="217"/>
    </location>
</feature>
<feature type="compositionally biased region" description="Basic and acidic residues" evidence="3">
    <location>
        <begin position="223"/>
        <end position="288"/>
    </location>
</feature>
<feature type="compositionally biased region" description="Basic and acidic residues" evidence="3">
    <location>
        <begin position="306"/>
        <end position="377"/>
    </location>
</feature>
<feature type="compositionally biased region" description="Basic and acidic residues" evidence="3">
    <location>
        <begin position="400"/>
        <end position="417"/>
    </location>
</feature>
<feature type="compositionally biased region" description="Basic and acidic residues" evidence="3">
    <location>
        <begin position="432"/>
        <end position="447"/>
    </location>
</feature>
<accession>Q4X1D7</accession>